<gene>
    <name evidence="3" type="primary">rfc</name>
</gene>
<reference key="1">
    <citation type="journal article" date="1992" name="Mol. Microbiol.">
        <title>Molecular analysis of the rfb gene cluster of Salmonella serovar muenchen (strain M67): the genetic basis of the polymorphism between groups C2 and B.</title>
        <authorList>
            <person name="Brown P.K."/>
            <person name="Romana L.K."/>
            <person name="Reeves P.R."/>
        </authorList>
    </citation>
    <scope>NUCLEOTIDE SEQUENCE [GENOMIC DNA]</scope>
    <source>
        <strain>M67</strain>
    </source>
</reference>
<organism>
    <name type="scientific">Salmonella muenchen</name>
    <dbReference type="NCBI Taxonomy" id="596"/>
    <lineage>
        <taxon>Bacteria</taxon>
        <taxon>Pseudomonadati</taxon>
        <taxon>Pseudomonadota</taxon>
        <taxon>Gammaproteobacteria</taxon>
        <taxon>Enterobacterales</taxon>
        <taxon>Enterobacteriaceae</taxon>
        <taxon>Salmonella</taxon>
    </lineage>
</organism>
<feature type="chain" id="PRO_0000097299" description="O-antigen polymerase">
    <location>
        <begin position="1"/>
        <end position="399"/>
    </location>
</feature>
<feature type="transmembrane region" description="Helical" evidence="2">
    <location>
        <begin position="4"/>
        <end position="24"/>
    </location>
</feature>
<feature type="transmembrane region" description="Helical" evidence="2">
    <location>
        <begin position="37"/>
        <end position="57"/>
    </location>
</feature>
<feature type="transmembrane region" description="Helical" evidence="2">
    <location>
        <begin position="64"/>
        <end position="84"/>
    </location>
</feature>
<feature type="transmembrane region" description="Helical" evidence="2">
    <location>
        <begin position="97"/>
        <end position="117"/>
    </location>
</feature>
<feature type="transmembrane region" description="Helical" evidence="2">
    <location>
        <begin position="151"/>
        <end position="171"/>
    </location>
</feature>
<feature type="transmembrane region" description="Helical" evidence="2">
    <location>
        <begin position="185"/>
        <end position="205"/>
    </location>
</feature>
<feature type="transmembrane region" description="Helical" evidence="2">
    <location>
        <begin position="222"/>
        <end position="242"/>
    </location>
</feature>
<feature type="transmembrane region" description="Helical" evidence="2">
    <location>
        <begin position="309"/>
        <end position="329"/>
    </location>
</feature>
<feature type="transmembrane region" description="Helical" evidence="2">
    <location>
        <begin position="353"/>
        <end position="373"/>
    </location>
</feature>
<feature type="transmembrane region" description="Helical" evidence="2">
    <location>
        <begin position="374"/>
        <end position="394"/>
    </location>
</feature>
<accession>Q00474</accession>
<evidence type="ECO:0000250" key="1">
    <source>
        <dbReference type="UniProtKB" id="Q58YW1"/>
    </source>
</evidence>
<evidence type="ECO:0000255" key="2"/>
<evidence type="ECO:0000303" key="3">
    <source>
    </source>
</evidence>
<evidence type="ECO:0000305" key="4"/>
<keyword id="KW-0997">Cell inner membrane</keyword>
<keyword id="KW-1003">Cell membrane</keyword>
<keyword id="KW-0448">Lipopolysaccharide biosynthesis</keyword>
<keyword id="KW-0472">Membrane</keyword>
<keyword id="KW-0808">Transferase</keyword>
<keyword id="KW-0812">Transmembrane</keyword>
<keyword id="KW-1133">Transmembrane helix</keyword>
<name>WZY_SALMU</name>
<proteinExistence type="inferred from homology"/>
<protein>
    <recommendedName>
        <fullName evidence="4">O-antigen polymerase</fullName>
        <ecNumber evidence="1">2.4.99.27</ecNumber>
    </recommendedName>
</protein>
<sequence>MLPFPPGAILRDVLNVFFVALVLVRFVIDRKKTYFPLVFTIFSWSAVILWVIALTIFSPDKIQAIMGGRSYILFPAVFIALVILKVSYPQSLNIEKIVCYIIFLMFMVATISIIDVLMNGEFIKLLGYDEHYAGEQLNLINSYDGMVRATGGFSDALNFGYMLTLGVLLCMECFSQGYKRLLMLIISFVLFIAICMSLTRGAILVAALIYALYIISNRKMLFCGITLFVIIIPVLAISTNIFDNYTEILIGRFTDSSQASRGSTQGRIDMAINSLNFLSEHPSGIGLGTQGSGNMLSVKDNRLNTDNYFFWIALETGIIGLIINIIYLASQFYSSTLLNRIYGSHCSNMHYRLYFLFGSIYFISAALSSAPSSSTFSIYYWTVLALIPFLKLTNRRCTR</sequence>
<dbReference type="EC" id="2.4.99.27" evidence="1"/>
<dbReference type="EMBL" id="X61917">
    <property type="protein sequence ID" value="CAA43912.1"/>
    <property type="molecule type" value="Genomic_DNA"/>
</dbReference>
<dbReference type="RefSeq" id="WP_000936591.1">
    <property type="nucleotide sequence ID" value="NZ_VUJE01000001.1"/>
</dbReference>
<dbReference type="PATRIC" id="fig|596.10.peg.4306"/>
<dbReference type="BioCyc" id="MetaCyc:MONOMER-21436"/>
<dbReference type="UniPathway" id="UPA00281"/>
<dbReference type="GO" id="GO:0005886">
    <property type="term" value="C:plasma membrane"/>
    <property type="evidence" value="ECO:0007669"/>
    <property type="project" value="UniProtKB-SubCell"/>
</dbReference>
<dbReference type="GO" id="GO:0016740">
    <property type="term" value="F:transferase activity"/>
    <property type="evidence" value="ECO:0007669"/>
    <property type="project" value="UniProtKB-KW"/>
</dbReference>
<dbReference type="GO" id="GO:0009103">
    <property type="term" value="P:lipopolysaccharide biosynthetic process"/>
    <property type="evidence" value="ECO:0007669"/>
    <property type="project" value="UniProtKB-UniPathway"/>
</dbReference>
<dbReference type="InterPro" id="IPR007016">
    <property type="entry name" value="O-antigen_ligase-rel_domated"/>
</dbReference>
<dbReference type="InterPro" id="IPR051533">
    <property type="entry name" value="WaaL-like"/>
</dbReference>
<dbReference type="PANTHER" id="PTHR37422:SF17">
    <property type="entry name" value="O-ANTIGEN LIGASE"/>
    <property type="match status" value="1"/>
</dbReference>
<dbReference type="PANTHER" id="PTHR37422">
    <property type="entry name" value="TEICHURONIC ACID BIOSYNTHESIS PROTEIN TUAE"/>
    <property type="match status" value="1"/>
</dbReference>
<dbReference type="Pfam" id="PF04932">
    <property type="entry name" value="Wzy_C"/>
    <property type="match status" value="1"/>
</dbReference>
<comment type="function">
    <text evidence="1">Polymerase involved in the biosynthesis of the lipopolysaccharide (LPS) (By similarity). Catalyzes the polymerization of the O-antigen repeat units on the periplasmic face of the inner membrane, leading to the formation of the lipid-linked O-antigen molecule (By similarity).</text>
</comment>
<comment type="catalytic activity">
    <reaction evidence="1">
        <text>n lipid-linked O-antigen repeat units = a lipid-linked O antigen + (n-1) polyisoprenyl diphosphate.</text>
        <dbReference type="EC" id="2.4.99.27"/>
    </reaction>
</comment>
<comment type="pathway">
    <text evidence="1">Bacterial outer membrane biogenesis; LPS O-antigen biosynthesis.</text>
</comment>
<comment type="subcellular location">
    <subcellularLocation>
        <location evidence="1">Cell inner membrane</location>
        <topology evidence="2">Multi-pass membrane protein</topology>
    </subcellularLocation>
</comment>